<accession>A9MGD1</accession>
<proteinExistence type="inferred from homology"/>
<name>RL32_SALAR</name>
<protein>
    <recommendedName>
        <fullName evidence="1">Large ribosomal subunit protein bL32</fullName>
    </recommendedName>
    <alternativeName>
        <fullName evidence="3">50S ribosomal protein L32</fullName>
    </alternativeName>
</protein>
<dbReference type="EMBL" id="CP000880">
    <property type="protein sequence ID" value="ABX21693.1"/>
    <property type="molecule type" value="Genomic_DNA"/>
</dbReference>
<dbReference type="SMR" id="A9MGD1"/>
<dbReference type="STRING" id="41514.SARI_01807"/>
<dbReference type="KEGG" id="ses:SARI_01807"/>
<dbReference type="HOGENOM" id="CLU_129084_2_1_6"/>
<dbReference type="Proteomes" id="UP000002084">
    <property type="component" value="Chromosome"/>
</dbReference>
<dbReference type="GO" id="GO:0015934">
    <property type="term" value="C:large ribosomal subunit"/>
    <property type="evidence" value="ECO:0007669"/>
    <property type="project" value="InterPro"/>
</dbReference>
<dbReference type="GO" id="GO:0003735">
    <property type="term" value="F:structural constituent of ribosome"/>
    <property type="evidence" value="ECO:0007669"/>
    <property type="project" value="InterPro"/>
</dbReference>
<dbReference type="GO" id="GO:0006412">
    <property type="term" value="P:translation"/>
    <property type="evidence" value="ECO:0007669"/>
    <property type="project" value="UniProtKB-UniRule"/>
</dbReference>
<dbReference type="HAMAP" id="MF_00340">
    <property type="entry name" value="Ribosomal_bL32"/>
    <property type="match status" value="1"/>
</dbReference>
<dbReference type="InterPro" id="IPR002677">
    <property type="entry name" value="Ribosomal_bL32"/>
</dbReference>
<dbReference type="InterPro" id="IPR044957">
    <property type="entry name" value="Ribosomal_bL32_bact"/>
</dbReference>
<dbReference type="InterPro" id="IPR011332">
    <property type="entry name" value="Ribosomal_zn-bd"/>
</dbReference>
<dbReference type="NCBIfam" id="TIGR01031">
    <property type="entry name" value="rpmF_bact"/>
    <property type="match status" value="1"/>
</dbReference>
<dbReference type="PANTHER" id="PTHR35534">
    <property type="entry name" value="50S RIBOSOMAL PROTEIN L32"/>
    <property type="match status" value="1"/>
</dbReference>
<dbReference type="PANTHER" id="PTHR35534:SF1">
    <property type="entry name" value="LARGE RIBOSOMAL SUBUNIT PROTEIN BL32"/>
    <property type="match status" value="1"/>
</dbReference>
<dbReference type="Pfam" id="PF01783">
    <property type="entry name" value="Ribosomal_L32p"/>
    <property type="match status" value="1"/>
</dbReference>
<dbReference type="SUPFAM" id="SSF57829">
    <property type="entry name" value="Zn-binding ribosomal proteins"/>
    <property type="match status" value="1"/>
</dbReference>
<sequence length="57" mass="6446">MAVQQNKPTRSKRGMRRSHDALTAVTSLSVDKTSGEKHLRHHITADGYYRGRKVIAK</sequence>
<gene>
    <name evidence="1" type="primary">rpmF</name>
    <name type="ordered locus">SARI_01807</name>
</gene>
<reference key="1">
    <citation type="submission" date="2007-11" db="EMBL/GenBank/DDBJ databases">
        <authorList>
            <consortium name="The Salmonella enterica serovar Arizonae Genome Sequencing Project"/>
            <person name="McClelland M."/>
            <person name="Sanderson E.K."/>
            <person name="Porwollik S."/>
            <person name="Spieth J."/>
            <person name="Clifton W.S."/>
            <person name="Fulton R."/>
            <person name="Chunyan W."/>
            <person name="Wollam A."/>
            <person name="Shah N."/>
            <person name="Pepin K."/>
            <person name="Bhonagiri V."/>
            <person name="Nash W."/>
            <person name="Johnson M."/>
            <person name="Thiruvilangam P."/>
            <person name="Wilson R."/>
        </authorList>
    </citation>
    <scope>NUCLEOTIDE SEQUENCE [LARGE SCALE GENOMIC DNA]</scope>
    <source>
        <strain>ATCC BAA-731 / CDC346-86 / RSK2980</strain>
    </source>
</reference>
<keyword id="KW-1185">Reference proteome</keyword>
<keyword id="KW-0687">Ribonucleoprotein</keyword>
<keyword id="KW-0689">Ribosomal protein</keyword>
<comment type="similarity">
    <text evidence="1">Belongs to the bacterial ribosomal protein bL32 family.</text>
</comment>
<organism>
    <name type="scientific">Salmonella arizonae (strain ATCC BAA-731 / CDC346-86 / RSK2980)</name>
    <dbReference type="NCBI Taxonomy" id="41514"/>
    <lineage>
        <taxon>Bacteria</taxon>
        <taxon>Pseudomonadati</taxon>
        <taxon>Pseudomonadota</taxon>
        <taxon>Gammaproteobacteria</taxon>
        <taxon>Enterobacterales</taxon>
        <taxon>Enterobacteriaceae</taxon>
        <taxon>Salmonella</taxon>
    </lineage>
</organism>
<evidence type="ECO:0000255" key="1">
    <source>
        <dbReference type="HAMAP-Rule" id="MF_00340"/>
    </source>
</evidence>
<evidence type="ECO:0000256" key="2">
    <source>
        <dbReference type="SAM" id="MobiDB-lite"/>
    </source>
</evidence>
<evidence type="ECO:0000305" key="3"/>
<feature type="chain" id="PRO_1000079342" description="Large ribosomal subunit protein bL32">
    <location>
        <begin position="1"/>
        <end position="57"/>
    </location>
</feature>
<feature type="region of interest" description="Disordered" evidence="2">
    <location>
        <begin position="1"/>
        <end position="38"/>
    </location>
</feature>